<gene>
    <name evidence="9" type="primary">E(spl)m7-HLH</name>
    <name evidence="9" type="synonym">HLHm7</name>
    <name evidence="9" type="ORF">CG8361</name>
</gene>
<keyword id="KW-0217">Developmental protein</keyword>
<keyword id="KW-0221">Differentiation</keyword>
<keyword id="KW-0238">DNA-binding</keyword>
<keyword id="KW-0524">Neurogenesis</keyword>
<keyword id="KW-0539">Nucleus</keyword>
<keyword id="KW-1185">Reference proteome</keyword>
<keyword id="KW-0678">Repressor</keyword>
<keyword id="KW-0804">Transcription</keyword>
<keyword id="KW-0805">Transcription regulation</keyword>
<feature type="chain" id="PRO_0000127173" description="Enhancer of split m7 protein">
    <location>
        <begin position="1"/>
        <end position="186"/>
    </location>
</feature>
<feature type="domain" description="bHLH" evidence="4">
    <location>
        <begin position="13"/>
        <end position="68"/>
    </location>
</feature>
<feature type="domain" description="Orange" evidence="3">
    <location>
        <begin position="83"/>
        <end position="116"/>
    </location>
</feature>
<feature type="short sequence motif" description="WRPW motif">
    <location>
        <begin position="183"/>
        <end position="186"/>
    </location>
</feature>
<feature type="sequence variant" description="In strain: NVIII-9 and NVIII-46.">
    <location>
        <begin position="155"/>
        <end position="156"/>
    </location>
</feature>
<organism>
    <name type="scientific">Drosophila melanogaster</name>
    <name type="common">Fruit fly</name>
    <dbReference type="NCBI Taxonomy" id="7227"/>
    <lineage>
        <taxon>Eukaryota</taxon>
        <taxon>Metazoa</taxon>
        <taxon>Ecdysozoa</taxon>
        <taxon>Arthropoda</taxon>
        <taxon>Hexapoda</taxon>
        <taxon>Insecta</taxon>
        <taxon>Pterygota</taxon>
        <taxon>Neoptera</taxon>
        <taxon>Endopterygota</taxon>
        <taxon>Diptera</taxon>
        <taxon>Brachycera</taxon>
        <taxon>Muscomorpha</taxon>
        <taxon>Ephydroidea</taxon>
        <taxon>Drosophilidae</taxon>
        <taxon>Drosophila</taxon>
        <taxon>Sophophora</taxon>
    </lineage>
</organism>
<reference key="1">
    <citation type="journal article" date="1989" name="EMBO J.">
        <title>Closely related transcripts encoded by the neurogenic gene complex enhancer of split of Drosophila melanogaster.</title>
        <authorList>
            <person name="Klaembt C."/>
            <person name="Knust E."/>
            <person name="Tietze K."/>
            <person name="Campos-Ortega J.A."/>
        </authorList>
    </citation>
    <scope>NUCLEOTIDE SEQUENCE [GENOMIC DNA]</scope>
    <scope>DEVELOPMENTAL STAGE</scope>
</reference>
<reference key="2">
    <citation type="journal article" date="2005" name="Mol. Biol. Evol.">
        <title>Identifying signatures of selection at the enhancer of split neurogenic gene complex in Drosophila.</title>
        <authorList>
            <person name="Macdonald S.J."/>
            <person name="Long A.D."/>
        </authorList>
    </citation>
    <scope>NUCLEOTIDE SEQUENCE [GENOMIC DNA]</scope>
    <scope>VARIANT 155-SER--CYS-156 DEL</scope>
    <source>
        <strain>NVIII-1</strain>
        <strain>NVIII-18</strain>
        <strain>NVIII-2</strain>
        <strain>NVIII-22</strain>
        <strain>NVIII-24</strain>
        <strain>NVIII-28</strain>
        <strain>NVIII-41</strain>
        <strain>NVIII-42</strain>
        <strain>NVIII-46</strain>
        <strain>NVIII-5</strain>
        <strain>NVIII-9</strain>
        <strain>NVIII-m11</strain>
        <strain>NVIII-m12</strain>
        <strain>NVIII-m13</strain>
        <strain>NVIII-m15</strain>
        <strain>NVIII-m19</strain>
    </source>
</reference>
<reference key="3">
    <citation type="journal article" date="2000" name="Science">
        <title>The genome sequence of Drosophila melanogaster.</title>
        <authorList>
            <person name="Adams M.D."/>
            <person name="Celniker S.E."/>
            <person name="Holt R.A."/>
            <person name="Evans C.A."/>
            <person name="Gocayne J.D."/>
            <person name="Amanatides P.G."/>
            <person name="Scherer S.E."/>
            <person name="Li P.W."/>
            <person name="Hoskins R.A."/>
            <person name="Galle R.F."/>
            <person name="George R.A."/>
            <person name="Lewis S.E."/>
            <person name="Richards S."/>
            <person name="Ashburner M."/>
            <person name="Henderson S.N."/>
            <person name="Sutton G.G."/>
            <person name="Wortman J.R."/>
            <person name="Yandell M.D."/>
            <person name="Zhang Q."/>
            <person name="Chen L.X."/>
            <person name="Brandon R.C."/>
            <person name="Rogers Y.-H.C."/>
            <person name="Blazej R.G."/>
            <person name="Champe M."/>
            <person name="Pfeiffer B.D."/>
            <person name="Wan K.H."/>
            <person name="Doyle C."/>
            <person name="Baxter E.G."/>
            <person name="Helt G."/>
            <person name="Nelson C.R."/>
            <person name="Miklos G.L.G."/>
            <person name="Abril J.F."/>
            <person name="Agbayani A."/>
            <person name="An H.-J."/>
            <person name="Andrews-Pfannkoch C."/>
            <person name="Baldwin D."/>
            <person name="Ballew R.M."/>
            <person name="Basu A."/>
            <person name="Baxendale J."/>
            <person name="Bayraktaroglu L."/>
            <person name="Beasley E.M."/>
            <person name="Beeson K.Y."/>
            <person name="Benos P.V."/>
            <person name="Berman B.P."/>
            <person name="Bhandari D."/>
            <person name="Bolshakov S."/>
            <person name="Borkova D."/>
            <person name="Botchan M.R."/>
            <person name="Bouck J."/>
            <person name="Brokstein P."/>
            <person name="Brottier P."/>
            <person name="Burtis K.C."/>
            <person name="Busam D.A."/>
            <person name="Butler H."/>
            <person name="Cadieu E."/>
            <person name="Center A."/>
            <person name="Chandra I."/>
            <person name="Cherry J.M."/>
            <person name="Cawley S."/>
            <person name="Dahlke C."/>
            <person name="Davenport L.B."/>
            <person name="Davies P."/>
            <person name="de Pablos B."/>
            <person name="Delcher A."/>
            <person name="Deng Z."/>
            <person name="Mays A.D."/>
            <person name="Dew I."/>
            <person name="Dietz S.M."/>
            <person name="Dodson K."/>
            <person name="Doup L.E."/>
            <person name="Downes M."/>
            <person name="Dugan-Rocha S."/>
            <person name="Dunkov B.C."/>
            <person name="Dunn P."/>
            <person name="Durbin K.J."/>
            <person name="Evangelista C.C."/>
            <person name="Ferraz C."/>
            <person name="Ferriera S."/>
            <person name="Fleischmann W."/>
            <person name="Fosler C."/>
            <person name="Gabrielian A.E."/>
            <person name="Garg N.S."/>
            <person name="Gelbart W.M."/>
            <person name="Glasser K."/>
            <person name="Glodek A."/>
            <person name="Gong F."/>
            <person name="Gorrell J.H."/>
            <person name="Gu Z."/>
            <person name="Guan P."/>
            <person name="Harris M."/>
            <person name="Harris N.L."/>
            <person name="Harvey D.A."/>
            <person name="Heiman T.J."/>
            <person name="Hernandez J.R."/>
            <person name="Houck J."/>
            <person name="Hostin D."/>
            <person name="Houston K.A."/>
            <person name="Howland T.J."/>
            <person name="Wei M.-H."/>
            <person name="Ibegwam C."/>
            <person name="Jalali M."/>
            <person name="Kalush F."/>
            <person name="Karpen G.H."/>
            <person name="Ke Z."/>
            <person name="Kennison J.A."/>
            <person name="Ketchum K.A."/>
            <person name="Kimmel B.E."/>
            <person name="Kodira C.D."/>
            <person name="Kraft C.L."/>
            <person name="Kravitz S."/>
            <person name="Kulp D."/>
            <person name="Lai Z."/>
            <person name="Lasko P."/>
            <person name="Lei Y."/>
            <person name="Levitsky A.A."/>
            <person name="Li J.H."/>
            <person name="Li Z."/>
            <person name="Liang Y."/>
            <person name="Lin X."/>
            <person name="Liu X."/>
            <person name="Mattei B."/>
            <person name="McIntosh T.C."/>
            <person name="McLeod M.P."/>
            <person name="McPherson D."/>
            <person name="Merkulov G."/>
            <person name="Milshina N.V."/>
            <person name="Mobarry C."/>
            <person name="Morris J."/>
            <person name="Moshrefi A."/>
            <person name="Mount S.M."/>
            <person name="Moy M."/>
            <person name="Murphy B."/>
            <person name="Murphy L."/>
            <person name="Muzny D.M."/>
            <person name="Nelson D.L."/>
            <person name="Nelson D.R."/>
            <person name="Nelson K.A."/>
            <person name="Nixon K."/>
            <person name="Nusskern D.R."/>
            <person name="Pacleb J.M."/>
            <person name="Palazzolo M."/>
            <person name="Pittman G.S."/>
            <person name="Pan S."/>
            <person name="Pollard J."/>
            <person name="Puri V."/>
            <person name="Reese M.G."/>
            <person name="Reinert K."/>
            <person name="Remington K."/>
            <person name="Saunders R.D.C."/>
            <person name="Scheeler F."/>
            <person name="Shen H."/>
            <person name="Shue B.C."/>
            <person name="Siden-Kiamos I."/>
            <person name="Simpson M."/>
            <person name="Skupski M.P."/>
            <person name="Smith T.J."/>
            <person name="Spier E."/>
            <person name="Spradling A.C."/>
            <person name="Stapleton M."/>
            <person name="Strong R."/>
            <person name="Sun E."/>
            <person name="Svirskas R."/>
            <person name="Tector C."/>
            <person name="Turner R."/>
            <person name="Venter E."/>
            <person name="Wang A.H."/>
            <person name="Wang X."/>
            <person name="Wang Z.-Y."/>
            <person name="Wassarman D.A."/>
            <person name="Weinstock G.M."/>
            <person name="Weissenbach J."/>
            <person name="Williams S.M."/>
            <person name="Woodage T."/>
            <person name="Worley K.C."/>
            <person name="Wu D."/>
            <person name="Yang S."/>
            <person name="Yao Q.A."/>
            <person name="Ye J."/>
            <person name="Yeh R.-F."/>
            <person name="Zaveri J.S."/>
            <person name="Zhan M."/>
            <person name="Zhang G."/>
            <person name="Zhao Q."/>
            <person name="Zheng L."/>
            <person name="Zheng X.H."/>
            <person name="Zhong F.N."/>
            <person name="Zhong W."/>
            <person name="Zhou X."/>
            <person name="Zhu S.C."/>
            <person name="Zhu X."/>
            <person name="Smith H.O."/>
            <person name="Gibbs R.A."/>
            <person name="Myers E.W."/>
            <person name="Rubin G.M."/>
            <person name="Venter J.C."/>
        </authorList>
    </citation>
    <scope>NUCLEOTIDE SEQUENCE [LARGE SCALE GENOMIC DNA]</scope>
    <source>
        <strain>Berkeley</strain>
    </source>
</reference>
<reference key="4">
    <citation type="journal article" date="2002" name="Genome Biol.">
        <title>Annotation of the Drosophila melanogaster euchromatic genome: a systematic review.</title>
        <authorList>
            <person name="Misra S."/>
            <person name="Crosby M.A."/>
            <person name="Mungall C.J."/>
            <person name="Matthews B.B."/>
            <person name="Campbell K.S."/>
            <person name="Hradecky P."/>
            <person name="Huang Y."/>
            <person name="Kaminker J.S."/>
            <person name="Millburn G.H."/>
            <person name="Prochnik S.E."/>
            <person name="Smith C.D."/>
            <person name="Tupy J.L."/>
            <person name="Whitfield E.J."/>
            <person name="Bayraktaroglu L."/>
            <person name="Berman B.P."/>
            <person name="Bettencourt B.R."/>
            <person name="Celniker S.E."/>
            <person name="de Grey A.D.N.J."/>
            <person name="Drysdale R.A."/>
            <person name="Harris N.L."/>
            <person name="Richter J."/>
            <person name="Russo S."/>
            <person name="Schroeder A.J."/>
            <person name="Shu S.Q."/>
            <person name="Stapleton M."/>
            <person name="Yamada C."/>
            <person name="Ashburner M."/>
            <person name="Gelbart W.M."/>
            <person name="Rubin G.M."/>
            <person name="Lewis S.E."/>
        </authorList>
    </citation>
    <scope>GENOME REANNOTATION</scope>
    <source>
        <strain>Berkeley</strain>
    </source>
</reference>
<reference key="5">
    <citation type="submission" date="2005-05" db="EMBL/GenBank/DDBJ databases">
        <authorList>
            <person name="Stapleton M."/>
            <person name="Carlson J.W."/>
            <person name="Chavez C."/>
            <person name="Frise E."/>
            <person name="George R.A."/>
            <person name="Pacleb J.M."/>
            <person name="Park S."/>
            <person name="Wan K.H."/>
            <person name="Yu C."/>
            <person name="Celniker S.E."/>
        </authorList>
    </citation>
    <scope>NUCLEOTIDE SEQUENCE [LARGE SCALE MRNA]</scope>
    <source>
        <strain>Berkeley</strain>
    </source>
</reference>
<reference key="6">
    <citation type="journal article" date="1994" name="Cell">
        <title>Groucho is required for Drosophila neurogenesis, segmentation, and sex determination and interacts directly with hairy-related bHLH proteins.</title>
        <authorList>
            <person name="Paroush Z."/>
            <person name="Finley R.L. Jr."/>
            <person name="Kidd T."/>
            <person name="Wainwright S.M."/>
            <person name="Ingham P.W."/>
            <person name="Brent R."/>
            <person name="Ish-Horowicz D."/>
        </authorList>
    </citation>
    <scope>DOMAIN WRPW MOTIF</scope>
</reference>
<reference key="7">
    <citation type="journal article" date="2012" name="Development">
        <title>bHLH-O proteins are crucial for Drosophila neuroblast self-renewal and mediate Notch-induced overproliferation.</title>
        <authorList>
            <person name="Zacharioudaki E."/>
            <person name="Magadi S.S."/>
            <person name="Delidakis C."/>
        </authorList>
    </citation>
    <scope>DEVELOPMENTAL STAGE</scope>
</reference>
<name>ESM7_DROME</name>
<proteinExistence type="evidence at protein level"/>
<sequence>MATKYEMSKTYQYRKVMKPLLERKRRARINKCLDELKDLMAECVAQTGDAKFEKADILEVTVQHLRKLKESKKHVPANPEQSFRAGYIRAANEVSRALASLPRVDVAFGTTLMTHLGMRLNQLEQPMEQPQAVNTPLSIVCGSSSSSSTYSSASSCSSISPVSSGYASDNESLLQISSPGQVWRPW</sequence>
<evidence type="ECO:0000250" key="1">
    <source>
        <dbReference type="UniProtKB" id="P14003"/>
    </source>
</evidence>
<evidence type="ECO:0000250" key="2">
    <source>
        <dbReference type="UniProtKB" id="Q26263"/>
    </source>
</evidence>
<evidence type="ECO:0000255" key="3">
    <source>
        <dbReference type="PROSITE-ProRule" id="PRU00380"/>
    </source>
</evidence>
<evidence type="ECO:0000255" key="4">
    <source>
        <dbReference type="PROSITE-ProRule" id="PRU00981"/>
    </source>
</evidence>
<evidence type="ECO:0000269" key="5">
    <source>
    </source>
</evidence>
<evidence type="ECO:0000269" key="6">
    <source>
    </source>
</evidence>
<evidence type="ECO:0000269" key="7">
    <source>
    </source>
</evidence>
<evidence type="ECO:0000305" key="8"/>
<evidence type="ECO:0000312" key="9">
    <source>
        <dbReference type="FlyBase" id="FBgn0002633"/>
    </source>
</evidence>
<accession>P13097</accession>
<accession>Q5S487</accession>
<accession>Q5S4J5</accession>
<accession>Q9VBI6</accession>
<dbReference type="EMBL" id="X16553">
    <property type="protein sequence ID" value="CAA34553.1"/>
    <property type="molecule type" value="Genomic_DNA"/>
</dbReference>
<dbReference type="EMBL" id="AY779906">
    <property type="protein sequence ID" value="AAV59050.1"/>
    <property type="molecule type" value="Genomic_DNA"/>
</dbReference>
<dbReference type="EMBL" id="AY779907">
    <property type="protein sequence ID" value="AAV59062.1"/>
    <property type="molecule type" value="Genomic_DNA"/>
</dbReference>
<dbReference type="EMBL" id="AY779908">
    <property type="protein sequence ID" value="AAV59074.1"/>
    <property type="molecule type" value="Genomic_DNA"/>
</dbReference>
<dbReference type="EMBL" id="AY779909">
    <property type="protein sequence ID" value="AAV59086.1"/>
    <property type="molecule type" value="Genomic_DNA"/>
</dbReference>
<dbReference type="EMBL" id="AY779910">
    <property type="protein sequence ID" value="AAV59098.1"/>
    <property type="molecule type" value="Genomic_DNA"/>
</dbReference>
<dbReference type="EMBL" id="AY779911">
    <property type="protein sequence ID" value="AAV59110.1"/>
    <property type="molecule type" value="Genomic_DNA"/>
</dbReference>
<dbReference type="EMBL" id="AY779912">
    <property type="protein sequence ID" value="AAV59122.1"/>
    <property type="molecule type" value="Genomic_DNA"/>
</dbReference>
<dbReference type="EMBL" id="AY779913">
    <property type="protein sequence ID" value="AAV59134.1"/>
    <property type="molecule type" value="Genomic_DNA"/>
</dbReference>
<dbReference type="EMBL" id="AY779914">
    <property type="protein sequence ID" value="AAV59146.1"/>
    <property type="molecule type" value="Genomic_DNA"/>
</dbReference>
<dbReference type="EMBL" id="AY779915">
    <property type="protein sequence ID" value="AAV59158.1"/>
    <property type="molecule type" value="Genomic_DNA"/>
</dbReference>
<dbReference type="EMBL" id="AY779916">
    <property type="protein sequence ID" value="AAV59170.1"/>
    <property type="molecule type" value="Genomic_DNA"/>
</dbReference>
<dbReference type="EMBL" id="AY779917">
    <property type="protein sequence ID" value="AAV59182.1"/>
    <property type="molecule type" value="Genomic_DNA"/>
</dbReference>
<dbReference type="EMBL" id="AY779918">
    <property type="protein sequence ID" value="AAV59194.1"/>
    <property type="molecule type" value="Genomic_DNA"/>
</dbReference>
<dbReference type="EMBL" id="AY779919">
    <property type="protein sequence ID" value="AAV59206.1"/>
    <property type="molecule type" value="Genomic_DNA"/>
</dbReference>
<dbReference type="EMBL" id="AY779920">
    <property type="protein sequence ID" value="AAV59218.1"/>
    <property type="molecule type" value="Genomic_DNA"/>
</dbReference>
<dbReference type="EMBL" id="AY779921">
    <property type="protein sequence ID" value="AAV59230.1"/>
    <property type="molecule type" value="Genomic_DNA"/>
</dbReference>
<dbReference type="EMBL" id="AE014297">
    <property type="protein sequence ID" value="AAF56554.1"/>
    <property type="molecule type" value="Genomic_DNA"/>
</dbReference>
<dbReference type="EMBL" id="BT022121">
    <property type="protein sequence ID" value="AAY51516.1"/>
    <property type="molecule type" value="mRNA"/>
</dbReference>
<dbReference type="PIR" id="S03626">
    <property type="entry name" value="S03626"/>
</dbReference>
<dbReference type="RefSeq" id="NP_536753.1">
    <property type="nucleotide sequence ID" value="NM_080505.3"/>
</dbReference>
<dbReference type="SMR" id="P13097"/>
<dbReference type="BioGRID" id="68060">
    <property type="interactions" value="33"/>
</dbReference>
<dbReference type="DIP" id="DIP-626N"/>
<dbReference type="ELM" id="P13097"/>
<dbReference type="FunCoup" id="P13097">
    <property type="interactions" value="32"/>
</dbReference>
<dbReference type="IntAct" id="P13097">
    <property type="interactions" value="13"/>
</dbReference>
<dbReference type="MINT" id="P13097"/>
<dbReference type="STRING" id="7227.FBpp0084334"/>
<dbReference type="PaxDb" id="7227-FBpp0084334"/>
<dbReference type="EnsemblMetazoa" id="FBtr0084960">
    <property type="protein sequence ID" value="FBpp0084334"/>
    <property type="gene ID" value="FBgn0002633"/>
</dbReference>
<dbReference type="GeneID" id="43160"/>
<dbReference type="KEGG" id="dme:Dmel_CG8361"/>
<dbReference type="AGR" id="FB:FBgn0002633"/>
<dbReference type="CTD" id="43160"/>
<dbReference type="FlyBase" id="FBgn0002633">
    <property type="gene designation" value="E(spl)m7-HLH"/>
</dbReference>
<dbReference type="VEuPathDB" id="VectorBase:FBgn0002633"/>
<dbReference type="eggNOG" id="KOG4304">
    <property type="taxonomic scope" value="Eukaryota"/>
</dbReference>
<dbReference type="GeneTree" id="ENSGT00940000167178"/>
<dbReference type="HOGENOM" id="CLU_068550_2_2_1"/>
<dbReference type="InParanoid" id="P13097"/>
<dbReference type="OMA" id="NNEYHRV"/>
<dbReference type="OrthoDB" id="6085656at2759"/>
<dbReference type="PhylomeDB" id="P13097"/>
<dbReference type="SignaLink" id="P13097"/>
<dbReference type="BioGRID-ORCS" id="43160">
    <property type="hits" value="0 hits in 1 CRISPR screen"/>
</dbReference>
<dbReference type="GenomeRNAi" id="43160"/>
<dbReference type="PRO" id="PR:P13097"/>
<dbReference type="Proteomes" id="UP000000803">
    <property type="component" value="Chromosome 3R"/>
</dbReference>
<dbReference type="Bgee" id="FBgn0002633">
    <property type="expression patterns" value="Expressed in polar follicle cell (Drosophila) in ovary and 47 other cell types or tissues"/>
</dbReference>
<dbReference type="GO" id="GO:0005634">
    <property type="term" value="C:nucleus"/>
    <property type="evidence" value="ECO:0000318"/>
    <property type="project" value="GO_Central"/>
</dbReference>
<dbReference type="GO" id="GO:0140297">
    <property type="term" value="F:DNA-binding transcription factor binding"/>
    <property type="evidence" value="ECO:0000316"/>
    <property type="project" value="FlyBase"/>
</dbReference>
<dbReference type="GO" id="GO:0001227">
    <property type="term" value="F:DNA-binding transcription repressor activity, RNA polymerase II-specific"/>
    <property type="evidence" value="ECO:0000314"/>
    <property type="project" value="FlyBase"/>
</dbReference>
<dbReference type="GO" id="GO:0046983">
    <property type="term" value="F:protein dimerization activity"/>
    <property type="evidence" value="ECO:0007669"/>
    <property type="project" value="InterPro"/>
</dbReference>
<dbReference type="GO" id="GO:0000978">
    <property type="term" value="F:RNA polymerase II cis-regulatory region sequence-specific DNA binding"/>
    <property type="evidence" value="ECO:0000318"/>
    <property type="project" value="GO_Central"/>
</dbReference>
<dbReference type="GO" id="GO:0043565">
    <property type="term" value="F:sequence-specific DNA binding"/>
    <property type="evidence" value="ECO:0000314"/>
    <property type="project" value="FlyBase"/>
</dbReference>
<dbReference type="GO" id="GO:1990837">
    <property type="term" value="F:sequence-specific double-stranded DNA binding"/>
    <property type="evidence" value="ECO:0000314"/>
    <property type="project" value="UniProtKB"/>
</dbReference>
<dbReference type="GO" id="GO:0001222">
    <property type="term" value="F:transcription corepressor binding"/>
    <property type="evidence" value="ECO:0000316"/>
    <property type="project" value="FlyBase"/>
</dbReference>
<dbReference type="GO" id="GO:0030154">
    <property type="term" value="P:cell differentiation"/>
    <property type="evidence" value="ECO:0007669"/>
    <property type="project" value="UniProtKB-KW"/>
</dbReference>
<dbReference type="GO" id="GO:0000122">
    <property type="term" value="P:negative regulation of transcription by RNA polymerase II"/>
    <property type="evidence" value="ECO:0000314"/>
    <property type="project" value="FlyBase"/>
</dbReference>
<dbReference type="GO" id="GO:0007399">
    <property type="term" value="P:nervous system development"/>
    <property type="evidence" value="ECO:0007669"/>
    <property type="project" value="UniProtKB-KW"/>
</dbReference>
<dbReference type="GO" id="GO:0050767">
    <property type="term" value="P:regulation of neurogenesis"/>
    <property type="evidence" value="ECO:0000318"/>
    <property type="project" value="GO_Central"/>
</dbReference>
<dbReference type="CDD" id="cd19741">
    <property type="entry name" value="bHLH-O_ESMB_like"/>
    <property type="match status" value="1"/>
</dbReference>
<dbReference type="FunFam" id="4.10.280.10:FF:000009">
    <property type="entry name" value="Transcription factor HES-1"/>
    <property type="match status" value="1"/>
</dbReference>
<dbReference type="Gene3D" id="4.10.280.10">
    <property type="entry name" value="Helix-loop-helix DNA-binding domain"/>
    <property type="match status" value="1"/>
</dbReference>
<dbReference type="InterPro" id="IPR011598">
    <property type="entry name" value="bHLH_dom"/>
</dbReference>
<dbReference type="InterPro" id="IPR050370">
    <property type="entry name" value="HES_HEY"/>
</dbReference>
<dbReference type="InterPro" id="IPR036638">
    <property type="entry name" value="HLH_DNA-bd_sf"/>
</dbReference>
<dbReference type="InterPro" id="IPR003650">
    <property type="entry name" value="Orange_dom"/>
</dbReference>
<dbReference type="PANTHER" id="PTHR10985">
    <property type="entry name" value="BASIC HELIX-LOOP-HELIX TRANSCRIPTION FACTOR, HES-RELATED"/>
    <property type="match status" value="1"/>
</dbReference>
<dbReference type="Pfam" id="PF07527">
    <property type="entry name" value="Hairy_orange"/>
    <property type="match status" value="1"/>
</dbReference>
<dbReference type="Pfam" id="PF00010">
    <property type="entry name" value="HLH"/>
    <property type="match status" value="1"/>
</dbReference>
<dbReference type="SMART" id="SM00353">
    <property type="entry name" value="HLH"/>
    <property type="match status" value="1"/>
</dbReference>
<dbReference type="SMART" id="SM00511">
    <property type="entry name" value="ORANGE"/>
    <property type="match status" value="1"/>
</dbReference>
<dbReference type="SUPFAM" id="SSF47459">
    <property type="entry name" value="HLH, helix-loop-helix DNA-binding domain"/>
    <property type="match status" value="1"/>
</dbReference>
<dbReference type="SUPFAM" id="SSF158457">
    <property type="entry name" value="Orange domain-like"/>
    <property type="match status" value="1"/>
</dbReference>
<dbReference type="PROSITE" id="PS50888">
    <property type="entry name" value="BHLH"/>
    <property type="match status" value="1"/>
</dbReference>
<dbReference type="PROSITE" id="PS51054">
    <property type="entry name" value="ORANGE"/>
    <property type="match status" value="1"/>
</dbReference>
<protein>
    <recommendedName>
        <fullName>Enhancer of split m7 protein</fullName>
        <shortName>E(spl)m7</shortName>
    </recommendedName>
</protein>
<comment type="function">
    <text>Participates in the control of cell fate choice by uncommitted neuroectodermal cells in the embryo. Transcriptional repressor. Binds DNA on N-box motifs: 5'-CACNAG-3'.</text>
</comment>
<comment type="subunit">
    <text evidence="1 2">Transcription repression requires formation of a complex with a corepressor protein (Groucho). Forms homodimers.</text>
</comment>
<comment type="subcellular location">
    <subcellularLocation>
        <location evidence="8">Nucleus</location>
    </subcellularLocation>
</comment>
<comment type="developmental stage">
    <text evidence="5 6">In larva, detected in the optic lobe and weakly in the neuroblasts (at protein level) (PubMed:22357926). Expressed at the time when separation of neural and epidermal precursor cells occurs (PubMed:2540957). Mesectodermal expression appears shortly before the onset of gastrulation (PubMed:2540957). In imaginal disks, expression is seen primarily within presumptive proneural clusters of eye-antennal, wing and leg disks (PubMed:2540957).</text>
</comment>
<comment type="domain">
    <text evidence="7">The orange domain and the basic helix-loop-helix motif mediate repression of specific transcriptional activators, such as basic helix-loop-helix protein dimers.</text>
</comment>
<comment type="domain">
    <text evidence="7">The C-terminal WRPW motif is a transcriptional repression domain necessary for the interaction with Groucho, a transcriptional corepressor recruited to specific target DNA by Hairy-related proteins.</text>
</comment>